<feature type="chain" id="PRO_1000130476" description="Glucose-1-phosphate adenylyltransferase">
    <location>
        <begin position="1"/>
        <end position="431"/>
    </location>
</feature>
<feature type="binding site" evidence="1">
    <location>
        <position position="39"/>
    </location>
    <ligand>
        <name>beta-D-fructose 1,6-bisphosphate</name>
        <dbReference type="ChEBI" id="CHEBI:32966"/>
    </ligand>
</feature>
<feature type="binding site" evidence="1">
    <location>
        <position position="40"/>
    </location>
    <ligand>
        <name>AMP</name>
        <dbReference type="ChEBI" id="CHEBI:456215"/>
    </ligand>
</feature>
<feature type="binding site" evidence="1">
    <location>
        <position position="46"/>
    </location>
    <ligand>
        <name>AMP</name>
        <dbReference type="ChEBI" id="CHEBI:456215"/>
    </ligand>
</feature>
<feature type="binding site" evidence="1">
    <location>
        <position position="52"/>
    </location>
    <ligand>
        <name>AMP</name>
        <dbReference type="ChEBI" id="CHEBI:456215"/>
    </ligand>
</feature>
<feature type="binding site" evidence="1">
    <location>
        <position position="114"/>
    </location>
    <ligand>
        <name>alpha-D-glucose 1-phosphate</name>
        <dbReference type="ChEBI" id="CHEBI:58601"/>
    </ligand>
</feature>
<feature type="binding site" evidence="1">
    <location>
        <position position="130"/>
    </location>
    <ligand>
        <name>AMP</name>
        <dbReference type="ChEBI" id="CHEBI:456215"/>
    </ligand>
</feature>
<feature type="binding site" evidence="1">
    <location>
        <position position="179"/>
    </location>
    <ligand>
        <name>alpha-D-glucose 1-phosphate</name>
        <dbReference type="ChEBI" id="CHEBI:58601"/>
    </ligand>
</feature>
<feature type="binding site" evidence="1">
    <location>
        <begin position="194"/>
        <end position="195"/>
    </location>
    <ligand>
        <name>alpha-D-glucose 1-phosphate</name>
        <dbReference type="ChEBI" id="CHEBI:58601"/>
    </ligand>
</feature>
<feature type="binding site" evidence="1">
    <location>
        <position position="212"/>
    </location>
    <ligand>
        <name>alpha-D-glucose 1-phosphate</name>
        <dbReference type="ChEBI" id="CHEBI:58601"/>
    </ligand>
</feature>
<feature type="binding site" evidence="1">
    <location>
        <position position="370"/>
    </location>
    <ligand>
        <name>AMP</name>
        <dbReference type="ChEBI" id="CHEBI:456215"/>
    </ligand>
</feature>
<feature type="binding site" evidence="1">
    <location>
        <position position="386"/>
    </location>
    <ligand>
        <name>AMP</name>
        <dbReference type="ChEBI" id="CHEBI:456215"/>
    </ligand>
</feature>
<feature type="binding site" evidence="1">
    <location>
        <begin position="419"/>
        <end position="423"/>
    </location>
    <ligand>
        <name>beta-D-fructose 1,6-bisphosphate</name>
        <dbReference type="ChEBI" id="CHEBI:32966"/>
    </ligand>
</feature>
<feature type="binding site" evidence="1">
    <location>
        <begin position="429"/>
        <end position="431"/>
    </location>
    <ligand>
        <name>beta-D-fructose 1,6-bisphosphate</name>
        <dbReference type="ChEBI" id="CHEBI:32966"/>
    </ligand>
</feature>
<feature type="site" description="Could play a key role in the communication between the regulatory and the substrate sites" evidence="1">
    <location>
        <position position="74"/>
    </location>
</feature>
<feature type="site" description="Could play a key role in the communication between the regulatory and the substrate sites" evidence="1">
    <location>
        <position position="113"/>
    </location>
</feature>
<keyword id="KW-0021">Allosteric enzyme</keyword>
<keyword id="KW-0067">ATP-binding</keyword>
<keyword id="KW-0119">Carbohydrate metabolism</keyword>
<keyword id="KW-0320">Glycogen biosynthesis</keyword>
<keyword id="KW-0321">Glycogen metabolism</keyword>
<keyword id="KW-0547">Nucleotide-binding</keyword>
<keyword id="KW-0548">Nucleotidyltransferase</keyword>
<keyword id="KW-0808">Transferase</keyword>
<comment type="function">
    <text evidence="1">Involved in the biosynthesis of ADP-glucose, a building block required for the elongation reactions to produce glycogen. Catalyzes the reaction between ATP and alpha-D-glucose 1-phosphate (G1P) to produce pyrophosphate and ADP-Glc.</text>
</comment>
<comment type="catalytic activity">
    <reaction evidence="1">
        <text>alpha-D-glucose 1-phosphate + ATP + H(+) = ADP-alpha-D-glucose + diphosphate</text>
        <dbReference type="Rhea" id="RHEA:12120"/>
        <dbReference type="ChEBI" id="CHEBI:15378"/>
        <dbReference type="ChEBI" id="CHEBI:30616"/>
        <dbReference type="ChEBI" id="CHEBI:33019"/>
        <dbReference type="ChEBI" id="CHEBI:57498"/>
        <dbReference type="ChEBI" id="CHEBI:58601"/>
        <dbReference type="EC" id="2.7.7.27"/>
    </reaction>
</comment>
<comment type="activity regulation">
    <text evidence="1">Allosterically activated by fructose-1,6-bisphosphate (F16BP) and inhibited by AMP.</text>
</comment>
<comment type="pathway">
    <text evidence="1">Glycan biosynthesis; glycogen biosynthesis.</text>
</comment>
<comment type="subunit">
    <text evidence="1">Homotetramer.</text>
</comment>
<comment type="similarity">
    <text evidence="1">Belongs to the bacterial/plant glucose-1-phosphate adenylyltransferase family.</text>
</comment>
<name>GLGC_ECO5E</name>
<proteinExistence type="inferred from homology"/>
<protein>
    <recommendedName>
        <fullName evidence="1">Glucose-1-phosphate adenylyltransferase</fullName>
        <ecNumber evidence="1">2.7.7.27</ecNumber>
    </recommendedName>
    <alternativeName>
        <fullName evidence="1">ADP-glucose pyrophosphorylase</fullName>
        <shortName evidence="1">ADPGlc PPase</shortName>
    </alternativeName>
    <alternativeName>
        <fullName evidence="1">ADP-glucose synthase</fullName>
    </alternativeName>
</protein>
<evidence type="ECO:0000255" key="1">
    <source>
        <dbReference type="HAMAP-Rule" id="MF_00624"/>
    </source>
</evidence>
<dbReference type="EC" id="2.7.7.27" evidence="1"/>
<dbReference type="EMBL" id="CP001164">
    <property type="protein sequence ID" value="ACI37045.1"/>
    <property type="molecule type" value="Genomic_DNA"/>
</dbReference>
<dbReference type="RefSeq" id="WP_000253975.1">
    <property type="nucleotide sequence ID" value="NC_011353.1"/>
</dbReference>
<dbReference type="SMR" id="B5YUI6"/>
<dbReference type="GeneID" id="93778559"/>
<dbReference type="KEGG" id="ecf:ECH74115_4742"/>
<dbReference type="HOGENOM" id="CLU_029499_14_1_6"/>
<dbReference type="UniPathway" id="UPA00164"/>
<dbReference type="GO" id="GO:0005524">
    <property type="term" value="F:ATP binding"/>
    <property type="evidence" value="ECO:0007669"/>
    <property type="project" value="UniProtKB-KW"/>
</dbReference>
<dbReference type="GO" id="GO:0008878">
    <property type="term" value="F:glucose-1-phosphate adenylyltransferase activity"/>
    <property type="evidence" value="ECO:0007669"/>
    <property type="project" value="UniProtKB-UniRule"/>
</dbReference>
<dbReference type="GO" id="GO:0005978">
    <property type="term" value="P:glycogen biosynthetic process"/>
    <property type="evidence" value="ECO:0007669"/>
    <property type="project" value="UniProtKB-UniRule"/>
</dbReference>
<dbReference type="CDD" id="cd02508">
    <property type="entry name" value="ADP_Glucose_PP"/>
    <property type="match status" value="1"/>
</dbReference>
<dbReference type="CDD" id="cd04651">
    <property type="entry name" value="LbH_G1P_AT_C"/>
    <property type="match status" value="1"/>
</dbReference>
<dbReference type="FunFam" id="2.160.10.10:FF:000006">
    <property type="entry name" value="Glucose-1-phosphate adenylyltransferase"/>
    <property type="match status" value="1"/>
</dbReference>
<dbReference type="FunFam" id="3.90.550.10:FF:000014">
    <property type="entry name" value="Glucose-1-phosphate adenylyltransferase"/>
    <property type="match status" value="1"/>
</dbReference>
<dbReference type="Gene3D" id="2.160.10.10">
    <property type="entry name" value="Hexapeptide repeat proteins"/>
    <property type="match status" value="1"/>
</dbReference>
<dbReference type="Gene3D" id="3.90.550.10">
    <property type="entry name" value="Spore Coat Polysaccharide Biosynthesis Protein SpsA, Chain A"/>
    <property type="match status" value="1"/>
</dbReference>
<dbReference type="HAMAP" id="MF_00624">
    <property type="entry name" value="GlgC"/>
    <property type="match status" value="1"/>
</dbReference>
<dbReference type="InterPro" id="IPR011831">
    <property type="entry name" value="ADP-Glc_PPase"/>
</dbReference>
<dbReference type="InterPro" id="IPR005836">
    <property type="entry name" value="ADP_Glu_pyroP_CS"/>
</dbReference>
<dbReference type="InterPro" id="IPR023049">
    <property type="entry name" value="GlgC_bac"/>
</dbReference>
<dbReference type="InterPro" id="IPR056818">
    <property type="entry name" value="GlmU/GlgC-like_hexapep"/>
</dbReference>
<dbReference type="InterPro" id="IPR005835">
    <property type="entry name" value="NTP_transferase_dom"/>
</dbReference>
<dbReference type="InterPro" id="IPR029044">
    <property type="entry name" value="Nucleotide-diphossugar_trans"/>
</dbReference>
<dbReference type="InterPro" id="IPR011004">
    <property type="entry name" value="Trimer_LpxA-like_sf"/>
</dbReference>
<dbReference type="NCBIfam" id="TIGR02091">
    <property type="entry name" value="glgC"/>
    <property type="match status" value="1"/>
</dbReference>
<dbReference type="NCBIfam" id="NF001947">
    <property type="entry name" value="PRK00725.1"/>
    <property type="match status" value="1"/>
</dbReference>
<dbReference type="NCBIfam" id="NF002023">
    <property type="entry name" value="PRK00844.1"/>
    <property type="match status" value="1"/>
</dbReference>
<dbReference type="PANTHER" id="PTHR43523:SF2">
    <property type="entry name" value="GLUCOSE-1-PHOSPHATE ADENYLYLTRANSFERASE"/>
    <property type="match status" value="1"/>
</dbReference>
<dbReference type="PANTHER" id="PTHR43523">
    <property type="entry name" value="GLUCOSE-1-PHOSPHATE ADENYLYLTRANSFERASE-RELATED"/>
    <property type="match status" value="1"/>
</dbReference>
<dbReference type="Pfam" id="PF24894">
    <property type="entry name" value="Hexapep_GlmU"/>
    <property type="match status" value="1"/>
</dbReference>
<dbReference type="Pfam" id="PF00483">
    <property type="entry name" value="NTP_transferase"/>
    <property type="match status" value="1"/>
</dbReference>
<dbReference type="SUPFAM" id="SSF53448">
    <property type="entry name" value="Nucleotide-diphospho-sugar transferases"/>
    <property type="match status" value="1"/>
</dbReference>
<dbReference type="SUPFAM" id="SSF51161">
    <property type="entry name" value="Trimeric LpxA-like enzymes"/>
    <property type="match status" value="1"/>
</dbReference>
<dbReference type="PROSITE" id="PS00808">
    <property type="entry name" value="ADP_GLC_PYROPHOSPH_1"/>
    <property type="match status" value="1"/>
</dbReference>
<dbReference type="PROSITE" id="PS00809">
    <property type="entry name" value="ADP_GLC_PYROPHOSPH_2"/>
    <property type="match status" value="1"/>
</dbReference>
<dbReference type="PROSITE" id="PS00810">
    <property type="entry name" value="ADP_GLC_PYROPHOSPH_3"/>
    <property type="match status" value="1"/>
</dbReference>
<gene>
    <name evidence="1" type="primary">glgC</name>
    <name type="ordered locus">ECH74115_4742</name>
</gene>
<reference key="1">
    <citation type="journal article" date="2011" name="Proc. Natl. Acad. Sci. U.S.A.">
        <title>Genomic anatomy of Escherichia coli O157:H7 outbreaks.</title>
        <authorList>
            <person name="Eppinger M."/>
            <person name="Mammel M.K."/>
            <person name="Leclerc J.E."/>
            <person name="Ravel J."/>
            <person name="Cebula T.A."/>
        </authorList>
    </citation>
    <scope>NUCLEOTIDE SEQUENCE [LARGE SCALE GENOMIC DNA]</scope>
    <source>
        <strain>EC4115 / EHEC</strain>
    </source>
</reference>
<sequence length="431" mass="48698">MVSLEKNDHLMLARQLPLKSVALILAGGRGTRLKDLTNKRAKPAVHFGGKFRIIDFALSNCINSGIRRMGVITQYQSHTLVQHIQRGWSFFNEEMNEFVDLLPAQQRMKGENWYRGTADAVTQNLDIIRRYKAEYVVILAGDHIYKQDYSRMLIDHVEKGARCTVACMPVPIEEASAFGVMAVDENDKIIEFVEKPANPPSMPNDPSKSLASMGIYVFDADYLYELLEEDDRDENSSHDFGKDLIPKITEAGLAYAHPFPLSCVQSDPDAEPYWRDVGTLEAYWKANLDLASVVPELDMYDRNWPIRTYNESLPPAKFVQDRSGSHGMTLNSLVSGGCVISGSVVVQSVLFSRVRVNSFCNIDSAVLLPEVWVGRSCRLRRCVIDRACVIPEGMVIGENAEEDARRFYRSEEGIVLVTREMLRKLGHKQER</sequence>
<accession>B5YUI6</accession>
<organism>
    <name type="scientific">Escherichia coli O157:H7 (strain EC4115 / EHEC)</name>
    <dbReference type="NCBI Taxonomy" id="444450"/>
    <lineage>
        <taxon>Bacteria</taxon>
        <taxon>Pseudomonadati</taxon>
        <taxon>Pseudomonadota</taxon>
        <taxon>Gammaproteobacteria</taxon>
        <taxon>Enterobacterales</taxon>
        <taxon>Enterobacteriaceae</taxon>
        <taxon>Escherichia</taxon>
    </lineage>
</organism>